<evidence type="ECO:0000250" key="1"/>
<evidence type="ECO:0000250" key="2">
    <source>
        <dbReference type="UniProtKB" id="P29973"/>
    </source>
</evidence>
<evidence type="ECO:0000255" key="3"/>
<evidence type="ECO:0000256" key="4">
    <source>
        <dbReference type="SAM" id="MobiDB-lite"/>
    </source>
</evidence>
<evidence type="ECO:0000305" key="5"/>
<sequence length="645" mass="74779">MKVGVIETHHSHPIIPSVVVQDTSEDPGLIEKGENRFARQWYLPGAFAQYNINNNSNKDEEKKKKKEKKSKSENKKDGERQKNKEKKEKHKNKDKKKGKEEEKKKDIFIIDPAGNMYYNWLFCITMPVMYNWTMIIARACFDELQNDYLAVWFIVDYVSDVIYIADMFVRTRTGYLEQGLLVKEEQKLKEKYKSSLQFKLDFLSIIPTDLLYFKLGLNYPELRINRLLRVARMFEFFQRTETRTNYPNIFRISNLVMYIVIIIHWNACVYYSISKAIGFGADTWVYPNTSHPEFARLTRKYVYSLYWSTLTLTTIGETPPPVRDSEYFFVVVDFLVGVLIFATIVGNVGSMISNMNAARAEFQAKIDAIKQYMHFRNVSKDMEKRVIKWFDYLWTNKKAVDEREVLKYLPDKLRAEIAINVHLETLKKVRIFADCEAGLLVELVLKLQPQVYSPGDYICRKGDIGREMYIIKEGKLAVVADDGVTQFVVLSDGSYFGEISILNIKGSKAGNRRTANIRSIGYSDLFCLSKDDLMEALTEYPDAKAMLEEKGKQILMKDGLLDIEVANLGSDPKDLEEKVAYMEGSMDRLQTKFARLLAEYDAAQQKLKKRLTQIEKILKPVMEQEFLDFEEADPPTDKPGVTKTE</sequence>
<reference key="1">
    <citation type="journal article" date="1993" name="Neuron">
        <title>Rod and cone photoreceptor cells express distinct genes for cGMP-gated channels.</title>
        <authorList>
            <person name="Boenigk W."/>
            <person name="Altenhofen W."/>
            <person name="Mueller F."/>
            <person name="Dose A."/>
            <person name="Illing M."/>
            <person name="Molday R.S."/>
            <person name="Kaupp U.B."/>
        </authorList>
    </citation>
    <scope>NUCLEOTIDE SEQUENCE [MRNA]</scope>
</reference>
<accession>Q90980</accession>
<comment type="function">
    <text>Visual signal transduction is mediated by a G-protein coupled cascade using cGMP as second messenger. This protein can be activated by cGMP which leads to an opening of the cation channel and thereby causing a depolarization of rod photoreceptors.</text>
</comment>
<comment type="subcellular location">
    <subcellularLocation>
        <location>Membrane</location>
        <topology>Multi-pass membrane protein</topology>
    </subcellularLocation>
</comment>
<comment type="similarity">
    <text evidence="5">Belongs to the cyclic nucleotide-gated cation channel (TC 1.A.1.5) family.</text>
</comment>
<keyword id="KW-0114">cAMP</keyword>
<keyword id="KW-0116">cAMP-binding</keyword>
<keyword id="KW-0407">Ion channel</keyword>
<keyword id="KW-0406">Ion transport</keyword>
<keyword id="KW-1071">Ligand-gated ion channel</keyword>
<keyword id="KW-0472">Membrane</keyword>
<keyword id="KW-0547">Nucleotide-binding</keyword>
<keyword id="KW-1185">Reference proteome</keyword>
<keyword id="KW-0716">Sensory transduction</keyword>
<keyword id="KW-0812">Transmembrane</keyword>
<keyword id="KW-1133">Transmembrane helix</keyword>
<keyword id="KW-0813">Transport</keyword>
<keyword id="KW-0844">Vision</keyword>
<feature type="chain" id="PRO_0000219325" description="Cyclic nucleotide-gated channel rod photoreceptor subunit alpha">
    <location>
        <begin position="1"/>
        <end position="645"/>
    </location>
</feature>
<feature type="topological domain" description="Cytoplasmic" evidence="5">
    <location>
        <begin position="1"/>
        <end position="121"/>
    </location>
</feature>
<feature type="transmembrane region" description="Helical; Name=S1" evidence="2">
    <location>
        <begin position="122"/>
        <end position="143"/>
    </location>
</feature>
<feature type="topological domain" description="Extracellular" evidence="5">
    <location>
        <begin position="144"/>
        <end position="153"/>
    </location>
</feature>
<feature type="transmembrane region" description="Helical; Name=S2" evidence="2">
    <location>
        <begin position="154"/>
        <end position="174"/>
    </location>
</feature>
<feature type="topological domain" description="Cytoplasmic" evidence="5">
    <location>
        <begin position="175"/>
        <end position="199"/>
    </location>
</feature>
<feature type="transmembrane region" description="Helical; Name=S3" evidence="2">
    <location>
        <begin position="200"/>
        <end position="218"/>
    </location>
</feature>
<feature type="topological domain" description="Extracellular" evidence="5">
    <location>
        <begin position="219"/>
        <end position="223"/>
    </location>
</feature>
<feature type="transmembrane region" description="Helical; Name=S4" evidence="2">
    <location>
        <begin position="224"/>
        <end position="242"/>
    </location>
</feature>
<feature type="topological domain" description="Cytoplasmic" evidence="5">
    <location>
        <begin position="243"/>
        <end position="249"/>
    </location>
</feature>
<feature type="transmembrane region" description="Helical; Name=S5" evidence="2">
    <location>
        <begin position="250"/>
        <end position="273"/>
    </location>
</feature>
<feature type="topological domain" description="Extracellular" evidence="5">
    <location>
        <begin position="274"/>
        <end position="296"/>
    </location>
</feature>
<feature type="transmembrane region" description="Helical; Name=P-helix" evidence="2">
    <location>
        <begin position="297"/>
        <end position="331"/>
    </location>
</feature>
<feature type="transmembrane region" description="Helical; Name=S6" evidence="2">
    <location>
        <begin position="332"/>
        <end position="356"/>
    </location>
</feature>
<feature type="topological domain" description="Cytoplasmic" evidence="5">
    <location>
        <begin position="357"/>
        <end position="645"/>
    </location>
</feature>
<feature type="region of interest" description="Disordered" evidence="4">
    <location>
        <begin position="53"/>
        <end position="100"/>
    </location>
</feature>
<feature type="compositionally biased region" description="Basic and acidic residues" evidence="4">
    <location>
        <begin position="70"/>
        <end position="86"/>
    </location>
</feature>
<feature type="compositionally biased region" description="Basic residues" evidence="4">
    <location>
        <begin position="87"/>
        <end position="96"/>
    </location>
</feature>
<feature type="binding site" evidence="1">
    <location>
        <begin position="439"/>
        <end position="561"/>
    </location>
    <ligand>
        <name>3',5'-cyclic GMP</name>
        <dbReference type="ChEBI" id="CHEBI:57746"/>
    </ligand>
</feature>
<feature type="binding site" evidence="3">
    <location>
        <position position="498"/>
    </location>
    <ligand>
        <name>3',5'-cyclic GMP</name>
        <dbReference type="ChEBI" id="CHEBI:57746"/>
    </ligand>
</feature>
<feature type="binding site" evidence="3">
    <location>
        <position position="513"/>
    </location>
    <ligand>
        <name>3',5'-cyclic GMP</name>
        <dbReference type="ChEBI" id="CHEBI:57746"/>
    </ligand>
</feature>
<dbReference type="EMBL" id="X89599">
    <property type="protein sequence ID" value="CAA61758.1"/>
    <property type="molecule type" value="mRNA"/>
</dbReference>
<dbReference type="PIR" id="I50680">
    <property type="entry name" value="I50680"/>
</dbReference>
<dbReference type="RefSeq" id="NP_990551.1">
    <property type="nucleotide sequence ID" value="NM_205220.3"/>
</dbReference>
<dbReference type="SMR" id="Q90980"/>
<dbReference type="FunCoup" id="Q90980">
    <property type="interactions" value="206"/>
</dbReference>
<dbReference type="STRING" id="9031.ENSGALP00000022830"/>
<dbReference type="PaxDb" id="9031-ENSGALP00000022830"/>
<dbReference type="Ensembl" id="ENSGALT00010040701.1">
    <property type="protein sequence ID" value="ENSGALP00010023666.1"/>
    <property type="gene ID" value="ENSGALG00010016871.1"/>
</dbReference>
<dbReference type="GeneID" id="396143"/>
<dbReference type="KEGG" id="gga:396143"/>
<dbReference type="CTD" id="1259"/>
<dbReference type="VEuPathDB" id="HostDB:geneid_396143"/>
<dbReference type="eggNOG" id="KOG0500">
    <property type="taxonomic scope" value="Eukaryota"/>
</dbReference>
<dbReference type="GeneTree" id="ENSGT00940000156074"/>
<dbReference type="HOGENOM" id="CLU_005746_12_0_1"/>
<dbReference type="InParanoid" id="Q90980"/>
<dbReference type="OMA" id="ECEPQTR"/>
<dbReference type="OrthoDB" id="421226at2759"/>
<dbReference type="PhylomeDB" id="Q90980"/>
<dbReference type="TreeFam" id="TF319048"/>
<dbReference type="Reactome" id="R-GGA-2485179">
    <property type="pathway name" value="Activation of the phototransduction cascade"/>
</dbReference>
<dbReference type="Reactome" id="R-GGA-2514859">
    <property type="pathway name" value="Inactivation, recovery and regulation of the phototransduction cascade"/>
</dbReference>
<dbReference type="PRO" id="PR:Q90980"/>
<dbReference type="Proteomes" id="UP000000539">
    <property type="component" value="Chromosome 4"/>
</dbReference>
<dbReference type="Bgee" id="ENSGALG00000014136">
    <property type="expression patterns" value="Expressed in granulocyte"/>
</dbReference>
<dbReference type="GO" id="GO:0017071">
    <property type="term" value="C:intracellular cyclic nucleotide activated cation channel complex"/>
    <property type="evidence" value="ECO:0000318"/>
    <property type="project" value="GO_Central"/>
</dbReference>
<dbReference type="GO" id="GO:0042622">
    <property type="term" value="C:photoreceptor outer segment membrane"/>
    <property type="evidence" value="ECO:0007669"/>
    <property type="project" value="Ensembl"/>
</dbReference>
<dbReference type="GO" id="GO:0005886">
    <property type="term" value="C:plasma membrane"/>
    <property type="evidence" value="ECO:0000318"/>
    <property type="project" value="GO_Central"/>
</dbReference>
<dbReference type="GO" id="GO:0120200">
    <property type="term" value="C:rod photoreceptor outer segment"/>
    <property type="evidence" value="ECO:0007669"/>
    <property type="project" value="Ensembl"/>
</dbReference>
<dbReference type="GO" id="GO:0030552">
    <property type="term" value="F:cAMP binding"/>
    <property type="evidence" value="ECO:0007669"/>
    <property type="project" value="UniProtKB-KW"/>
</dbReference>
<dbReference type="GO" id="GO:0030553">
    <property type="term" value="F:cGMP binding"/>
    <property type="evidence" value="ECO:0000318"/>
    <property type="project" value="GO_Central"/>
</dbReference>
<dbReference type="GO" id="GO:0005222">
    <property type="term" value="F:intracellularly cAMP-activated cation channel activity"/>
    <property type="evidence" value="ECO:0000318"/>
    <property type="project" value="GO_Central"/>
</dbReference>
<dbReference type="GO" id="GO:0005223">
    <property type="term" value="F:intracellularly cGMP-activated cation channel activity"/>
    <property type="evidence" value="ECO:0000318"/>
    <property type="project" value="GO_Central"/>
</dbReference>
<dbReference type="GO" id="GO:0044877">
    <property type="term" value="F:protein-containing complex binding"/>
    <property type="evidence" value="ECO:0000318"/>
    <property type="project" value="GO_Central"/>
</dbReference>
<dbReference type="GO" id="GO:0098655">
    <property type="term" value="P:monoatomic cation transmembrane transport"/>
    <property type="evidence" value="ECO:0000318"/>
    <property type="project" value="GO_Central"/>
</dbReference>
<dbReference type="GO" id="GO:0007601">
    <property type="term" value="P:visual perception"/>
    <property type="evidence" value="ECO:0007669"/>
    <property type="project" value="UniProtKB-KW"/>
</dbReference>
<dbReference type="CDD" id="cd00038">
    <property type="entry name" value="CAP_ED"/>
    <property type="match status" value="1"/>
</dbReference>
<dbReference type="FunFam" id="1.20.5.170:FF:000069">
    <property type="entry name" value="cGMP-gated cation channel alpha-1"/>
    <property type="match status" value="1"/>
</dbReference>
<dbReference type="FunFam" id="2.60.120.10:FF:000002">
    <property type="entry name" value="Cyclic nucleotide gated channel alpha 1a"/>
    <property type="match status" value="1"/>
</dbReference>
<dbReference type="FunFam" id="1.10.287.630:FF:000001">
    <property type="entry name" value="Cyclic nucleotide-gated channel alpha 3"/>
    <property type="match status" value="1"/>
</dbReference>
<dbReference type="FunFam" id="1.10.287.70:FF:000030">
    <property type="entry name" value="Cyclic nucleotide-gated channel alpha 3"/>
    <property type="match status" value="1"/>
</dbReference>
<dbReference type="FunFam" id="1.20.5.300:FF:000002">
    <property type="entry name" value="Cyclic nucleotide-gated channel alpha 3"/>
    <property type="match status" value="1"/>
</dbReference>
<dbReference type="Gene3D" id="1.10.287.70">
    <property type="match status" value="1"/>
</dbReference>
<dbReference type="Gene3D" id="1.20.5.300">
    <property type="match status" value="1"/>
</dbReference>
<dbReference type="Gene3D" id="1.10.287.630">
    <property type="entry name" value="Helix hairpin bin"/>
    <property type="match status" value="1"/>
</dbReference>
<dbReference type="Gene3D" id="2.60.120.10">
    <property type="entry name" value="Jelly Rolls"/>
    <property type="match status" value="1"/>
</dbReference>
<dbReference type="InterPro" id="IPR032406">
    <property type="entry name" value="CLZ_dom"/>
</dbReference>
<dbReference type="InterPro" id="IPR050866">
    <property type="entry name" value="CNG_cation_channel"/>
</dbReference>
<dbReference type="InterPro" id="IPR018488">
    <property type="entry name" value="cNMP-bd_CS"/>
</dbReference>
<dbReference type="InterPro" id="IPR000595">
    <property type="entry name" value="cNMP-bd_dom"/>
</dbReference>
<dbReference type="InterPro" id="IPR018490">
    <property type="entry name" value="cNMP-bd_dom_sf"/>
</dbReference>
<dbReference type="InterPro" id="IPR005821">
    <property type="entry name" value="Ion_trans_dom"/>
</dbReference>
<dbReference type="InterPro" id="IPR014710">
    <property type="entry name" value="RmlC-like_jellyroll"/>
</dbReference>
<dbReference type="PANTHER" id="PTHR45638">
    <property type="entry name" value="CYCLIC NUCLEOTIDE-GATED CATION CHANNEL SUBUNIT A"/>
    <property type="match status" value="1"/>
</dbReference>
<dbReference type="PANTHER" id="PTHR45638:SF9">
    <property type="entry name" value="CYCLIC NUCLEOTIDE-GATED CHANNEL ROD PHOTORECEPTOR SUBUNIT ALPHA"/>
    <property type="match status" value="1"/>
</dbReference>
<dbReference type="Pfam" id="PF16526">
    <property type="entry name" value="CLZ"/>
    <property type="match status" value="1"/>
</dbReference>
<dbReference type="Pfam" id="PF00027">
    <property type="entry name" value="cNMP_binding"/>
    <property type="match status" value="1"/>
</dbReference>
<dbReference type="Pfam" id="PF00520">
    <property type="entry name" value="Ion_trans"/>
    <property type="match status" value="1"/>
</dbReference>
<dbReference type="SMART" id="SM00100">
    <property type="entry name" value="cNMP"/>
    <property type="match status" value="1"/>
</dbReference>
<dbReference type="SUPFAM" id="SSF51206">
    <property type="entry name" value="cAMP-binding domain-like"/>
    <property type="match status" value="1"/>
</dbReference>
<dbReference type="SUPFAM" id="SSF81324">
    <property type="entry name" value="Voltage-gated potassium channels"/>
    <property type="match status" value="1"/>
</dbReference>
<dbReference type="PROSITE" id="PS00888">
    <property type="entry name" value="CNMP_BINDING_1"/>
    <property type="match status" value="1"/>
</dbReference>
<dbReference type="PROSITE" id="PS00889">
    <property type="entry name" value="CNMP_BINDING_2"/>
    <property type="match status" value="1"/>
</dbReference>
<dbReference type="PROSITE" id="PS50042">
    <property type="entry name" value="CNMP_BINDING_3"/>
    <property type="match status" value="1"/>
</dbReference>
<proteinExistence type="evidence at transcript level"/>
<organism>
    <name type="scientific">Gallus gallus</name>
    <name type="common">Chicken</name>
    <dbReference type="NCBI Taxonomy" id="9031"/>
    <lineage>
        <taxon>Eukaryota</taxon>
        <taxon>Metazoa</taxon>
        <taxon>Chordata</taxon>
        <taxon>Craniata</taxon>
        <taxon>Vertebrata</taxon>
        <taxon>Euteleostomi</taxon>
        <taxon>Archelosauria</taxon>
        <taxon>Archosauria</taxon>
        <taxon>Dinosauria</taxon>
        <taxon>Saurischia</taxon>
        <taxon>Theropoda</taxon>
        <taxon>Coelurosauria</taxon>
        <taxon>Aves</taxon>
        <taxon>Neognathae</taxon>
        <taxon>Galloanserae</taxon>
        <taxon>Galliformes</taxon>
        <taxon>Phasianidae</taxon>
        <taxon>Phasianinae</taxon>
        <taxon>Gallus</taxon>
    </lineage>
</organism>
<name>CNG3_CHICK</name>
<protein>
    <recommendedName>
        <fullName>Cyclic nucleotide-gated channel rod photoreceptor subunit alpha</fullName>
    </recommendedName>
    <alternativeName>
        <fullName>CNG channel 3</fullName>
        <shortName>CNG-3</shortName>
        <shortName>CNG3</shortName>
    </alternativeName>
</protein>